<reference key="1">
    <citation type="journal article" date="2005" name="Nature">
        <title>Sequencing of Aspergillus nidulans and comparative analysis with A. fumigatus and A. oryzae.</title>
        <authorList>
            <person name="Galagan J.E."/>
            <person name="Calvo S.E."/>
            <person name="Cuomo C."/>
            <person name="Ma L.-J."/>
            <person name="Wortman J.R."/>
            <person name="Batzoglou S."/>
            <person name="Lee S.-I."/>
            <person name="Bastuerkmen M."/>
            <person name="Spevak C.C."/>
            <person name="Clutterbuck J."/>
            <person name="Kapitonov V."/>
            <person name="Jurka J."/>
            <person name="Scazzocchio C."/>
            <person name="Farman M.L."/>
            <person name="Butler J."/>
            <person name="Purcell S."/>
            <person name="Harris S."/>
            <person name="Braus G.H."/>
            <person name="Draht O."/>
            <person name="Busch S."/>
            <person name="D'Enfert C."/>
            <person name="Bouchier C."/>
            <person name="Goldman G.H."/>
            <person name="Bell-Pedersen D."/>
            <person name="Griffiths-Jones S."/>
            <person name="Doonan J.H."/>
            <person name="Yu J."/>
            <person name="Vienken K."/>
            <person name="Pain A."/>
            <person name="Freitag M."/>
            <person name="Selker E.U."/>
            <person name="Archer D.B."/>
            <person name="Penalva M.A."/>
            <person name="Oakley B.R."/>
            <person name="Momany M."/>
            <person name="Tanaka T."/>
            <person name="Kumagai T."/>
            <person name="Asai K."/>
            <person name="Machida M."/>
            <person name="Nierman W.C."/>
            <person name="Denning D.W."/>
            <person name="Caddick M.X."/>
            <person name="Hynes M."/>
            <person name="Paoletti M."/>
            <person name="Fischer R."/>
            <person name="Miller B.L."/>
            <person name="Dyer P.S."/>
            <person name="Sachs M.S."/>
            <person name="Osmani S.A."/>
            <person name="Birren B.W."/>
        </authorList>
    </citation>
    <scope>NUCLEOTIDE SEQUENCE [LARGE SCALE GENOMIC DNA]</scope>
    <source>
        <strain>FGSC A4 / ATCC 38163 / CBS 112.46 / NRRL 194 / M139</strain>
    </source>
</reference>
<reference key="2">
    <citation type="journal article" date="2009" name="Fungal Genet. Biol.">
        <title>The 2008 update of the Aspergillus nidulans genome annotation: a community effort.</title>
        <authorList>
            <person name="Wortman J.R."/>
            <person name="Gilsenan J.M."/>
            <person name="Joardar V."/>
            <person name="Deegan J."/>
            <person name="Clutterbuck J."/>
            <person name="Andersen M.R."/>
            <person name="Archer D."/>
            <person name="Bencina M."/>
            <person name="Braus G."/>
            <person name="Coutinho P."/>
            <person name="von Dohren H."/>
            <person name="Doonan J."/>
            <person name="Driessen A.J."/>
            <person name="Durek P."/>
            <person name="Espeso E."/>
            <person name="Fekete E."/>
            <person name="Flipphi M."/>
            <person name="Estrada C.G."/>
            <person name="Geysens S."/>
            <person name="Goldman G."/>
            <person name="de Groot P.W."/>
            <person name="Hansen K."/>
            <person name="Harris S.D."/>
            <person name="Heinekamp T."/>
            <person name="Helmstaedt K."/>
            <person name="Henrissat B."/>
            <person name="Hofmann G."/>
            <person name="Homan T."/>
            <person name="Horio T."/>
            <person name="Horiuchi H."/>
            <person name="James S."/>
            <person name="Jones M."/>
            <person name="Karaffa L."/>
            <person name="Karanyi Z."/>
            <person name="Kato M."/>
            <person name="Keller N."/>
            <person name="Kelly D.E."/>
            <person name="Kiel J.A."/>
            <person name="Kim J.M."/>
            <person name="van der Klei I.J."/>
            <person name="Klis F.M."/>
            <person name="Kovalchuk A."/>
            <person name="Krasevec N."/>
            <person name="Kubicek C.P."/>
            <person name="Liu B."/>
            <person name="Maccabe A."/>
            <person name="Meyer V."/>
            <person name="Mirabito P."/>
            <person name="Miskei M."/>
            <person name="Mos M."/>
            <person name="Mullins J."/>
            <person name="Nelson D.R."/>
            <person name="Nielsen J."/>
            <person name="Oakley B.R."/>
            <person name="Osmani S.A."/>
            <person name="Pakula T."/>
            <person name="Paszewski A."/>
            <person name="Paulsen I."/>
            <person name="Pilsyk S."/>
            <person name="Pocsi I."/>
            <person name="Punt P.J."/>
            <person name="Ram A.F."/>
            <person name="Ren Q."/>
            <person name="Robellet X."/>
            <person name="Robson G."/>
            <person name="Seiboth B."/>
            <person name="van Solingen P."/>
            <person name="Specht T."/>
            <person name="Sun J."/>
            <person name="Taheri-Talesh N."/>
            <person name="Takeshita N."/>
            <person name="Ussery D."/>
            <person name="vanKuyk P.A."/>
            <person name="Visser H."/>
            <person name="van de Vondervoort P.J."/>
            <person name="de Vries R.P."/>
            <person name="Walton J."/>
            <person name="Xiang X."/>
            <person name="Xiong Y."/>
            <person name="Zeng A.P."/>
            <person name="Brandt B.W."/>
            <person name="Cornell M.J."/>
            <person name="van den Hondel C.A."/>
            <person name="Visser J."/>
            <person name="Oliver S.G."/>
            <person name="Turner G."/>
        </authorList>
    </citation>
    <scope>GENOME REANNOTATION</scope>
    <source>
        <strain>FGSC A4 / ATCC 38163 / CBS 112.46 / NRRL 194 / M139</strain>
    </source>
</reference>
<reference key="3">
    <citation type="journal article" date="2012" name="ACS Chem. Biol.">
        <title>Signaling the induction of sporulation involves the interaction of two secondary metabolites in Aspergillus nidulans.</title>
        <authorList>
            <person name="Rodriguez-Urra A.B."/>
            <person name="Jimenez C."/>
            <person name="Nieto M.I."/>
            <person name="Rodriguez J."/>
            <person name="Hayashi H."/>
            <person name="Ugalde U."/>
        </authorList>
    </citation>
    <scope>FUNCTION</scope>
</reference>
<reference key="4">
    <citation type="journal article" date="2012" name="J. Am. Chem. Soc.">
        <title>Two separate gene clusters encode the biosynthetic pathway for the meroterpenoids austinol and dehydroaustinol in Aspergillus nidulans.</title>
        <authorList>
            <person name="Lo H.C."/>
            <person name="Entwistle R."/>
            <person name="Guo C.J."/>
            <person name="Ahuja M."/>
            <person name="Szewczyk E."/>
            <person name="Hung J.H."/>
            <person name="Chiang Y.M."/>
            <person name="Oakley B.R."/>
            <person name="Wang C.C."/>
        </authorList>
    </citation>
    <scope>FUNCTION</scope>
    <scope>DISRUPTION PHENOTYPE</scope>
</reference>
<reference key="5">
    <citation type="journal article" date="2013" name="J. Am. Chem. Soc.">
        <title>Spiro-ring formation is catalyzed by a multifunctional dioxygenase in austinol biosynthesis.</title>
        <authorList>
            <person name="Matsuda Y."/>
            <person name="Awakawa T."/>
            <person name="Wakimoto T."/>
            <person name="Abe I."/>
        </authorList>
    </citation>
    <scope>FUNCTION</scope>
</reference>
<reference key="6">
    <citation type="journal article" date="2017" name="ACS Chem. Biol.">
        <title>Rewiring of the austinoid biosynthetic pathway in filamentous fungi.</title>
        <authorList>
            <person name="Mattern D.J."/>
            <person name="Valiante V."/>
            <person name="Horn F."/>
            <person name="Petzke L."/>
            <person name="Brakhage A.A."/>
        </authorList>
    </citation>
    <scope>FUNCTION</scope>
</reference>
<protein>
    <recommendedName>
        <fullName evidence="9">Polyprenyl transferase ausN</fullName>
        <ecNumber evidence="9">2.5.1.-</ecNumber>
    </recommendedName>
    <alternativeName>
        <fullName evidence="7">Austinoid biosynthesis clusters protein N</fullName>
    </alternativeName>
</protein>
<keyword id="KW-0460">Magnesium</keyword>
<keyword id="KW-0472">Membrane</keyword>
<keyword id="KW-1185">Reference proteome</keyword>
<keyword id="KW-0808">Transferase</keyword>
<keyword id="KW-0812">Transmembrane</keyword>
<keyword id="KW-1133">Transmembrane helix</keyword>
<name>AUSN_EMENI</name>
<evidence type="ECO:0000250" key="1">
    <source>
        <dbReference type="UniProtKB" id="P32378"/>
    </source>
</evidence>
<evidence type="ECO:0000255" key="2"/>
<evidence type="ECO:0000269" key="3">
    <source>
    </source>
</evidence>
<evidence type="ECO:0000269" key="4">
    <source>
    </source>
</evidence>
<evidence type="ECO:0000269" key="5">
    <source>
    </source>
</evidence>
<evidence type="ECO:0000269" key="6">
    <source>
    </source>
</evidence>
<evidence type="ECO:0000303" key="7">
    <source>
    </source>
</evidence>
<evidence type="ECO:0000305" key="8"/>
<evidence type="ECO:0000305" key="9">
    <source>
    </source>
</evidence>
<evidence type="ECO:0000305" key="10">
    <source>
    </source>
</evidence>
<proteinExistence type="inferred from homology"/>
<comment type="function">
    <text evidence="3 4 5 6">Polyprenyl transferase; part of the gene cluster B that mediates the biosynthesis of austinol and dehydroaustinol, two fungal meroterpenoids (PubMed:22329759). The first step of the pathway is the synthesis of 3,5-dimethylorsellinic acid by the polyketide synthase ausA (PubMed:22329759). 3,5-dimethylorsellinic acid is then prenylated by the polyprenyl transferase ausN (PubMed:22329759). Further epoxidation by the FAD-dependent monooxygenase ausM and cyclization by the probable terpene cyclase ausL lead to the formation of protoaustinoid A (PubMed:22329759). Protoaustinoid A is then oxidized to spiro-lactone preaustinoid A3 by the combined action of the FAD-binding monooxygenases ausB and ausC, and the dioxygenase ausE (PubMed:22329759, PubMed:23865690). Acid-catalyzed keto-rearrangement and ring contraction of the tetraketide portion of preaustinoid A3 by ausJ lead to the formation of preaustinoid A4 (PubMed:22329759). The aldo-keto reductase ausK, with the help of ausH, is involved in the next step by transforming preaustinoid A4 into isoaustinone which is in turn hydroxylated by the P450 monooxygenase ausI to form austinolide (PubMed:22329759). Finally, the cytochrome P450 monooxygenase ausG modifies austinolide to austinol (PubMed:22329759). Austinol can be further modified to dehydroaustinol which forms a diffusible complex with diorcinol that initiates conidiation (PubMed:22234162, PubMed:22329759). Due to genetic rearrangements of the clusters and the subsequent loss of some enzymes, the end products of the Emericella nidulans austinoid biosynthesis clusters are austinol and dehydroaustinol, even if additional enzymes, such as the O-acetyltransferase ausQ and the cytochrome P450 monooxygenase ausR are still functional (PubMed:29076725).</text>
</comment>
<comment type="catalytic activity">
    <reaction evidence="9">
        <text>3,5-dimethylorsellinate + (2E,6E)-farnesyl diphosphate = (3R)-3-farnesyl-6-hydroxy-2,3,5-trimethyl-4-oxocyclohexa-1,5-diene-1-carboxylate + diphosphate + H(+)</text>
        <dbReference type="Rhea" id="RHEA:49632"/>
        <dbReference type="ChEBI" id="CHEBI:15378"/>
        <dbReference type="ChEBI" id="CHEBI:33019"/>
        <dbReference type="ChEBI" id="CHEBI:131856"/>
        <dbReference type="ChEBI" id="CHEBI:131857"/>
        <dbReference type="ChEBI" id="CHEBI:175763"/>
    </reaction>
    <physiologicalReaction direction="left-to-right" evidence="9">
        <dbReference type="Rhea" id="RHEA:49633"/>
    </physiologicalReaction>
</comment>
<comment type="cofactor">
    <cofactor evidence="1">
        <name>Mg(2+)</name>
        <dbReference type="ChEBI" id="CHEBI:18420"/>
    </cofactor>
</comment>
<comment type="pathway">
    <text evidence="4">Secondary metabolite biosynthesis; terpenoid biosynthesis.</text>
</comment>
<comment type="subcellular location">
    <subcellularLocation>
        <location evidence="2">Membrane</location>
        <topology evidence="2">Multi-pass membrane protein</topology>
    </subcellularLocation>
</comment>
<comment type="disruption phenotype">
    <text evidence="4">Impairs the synthesis of austinol and dehydroaustinol and accumulates the intermediate compound 3,5-dimethylorsellinic acid (PubMed:22329759).</text>
</comment>
<comment type="miscellaneous">
    <text evidence="10">In A.calidoustus, the austinoid gene cluster lies on a contiguous DNA region, while clusters from E.nidulans and P.brasilianum are split in their respective genomes. Genetic rearrangements provoked variability among the clusters and E.nidulans produces the least number of austionoid derivatives with the end products austinol and dehydroaustinol, while P.brasilianum can produce until acetoxydehydroaustin, and A.calidoustus produces the highest number of identified derivatives.</text>
</comment>
<comment type="similarity">
    <text evidence="8">Belongs to the UbiA prenyltransferase family.</text>
</comment>
<feature type="chain" id="PRO_0000436495" description="Polyprenyl transferase ausN">
    <location>
        <begin position="1"/>
        <end position="330"/>
    </location>
</feature>
<feature type="transmembrane region" description="Helical" evidence="2">
    <location>
        <begin position="116"/>
        <end position="136"/>
    </location>
</feature>
<feature type="transmembrane region" description="Helical" evidence="2">
    <location>
        <begin position="165"/>
        <end position="185"/>
    </location>
</feature>
<feature type="transmembrane region" description="Helical" evidence="2">
    <location>
        <begin position="189"/>
        <end position="209"/>
    </location>
</feature>
<feature type="transmembrane region" description="Helical" evidence="2">
    <location>
        <begin position="238"/>
        <end position="258"/>
    </location>
</feature>
<feature type="transmembrane region" description="Helical" evidence="2">
    <location>
        <begin position="260"/>
        <end position="280"/>
    </location>
</feature>
<gene>
    <name evidence="7" type="primary">ausN</name>
    <name type="ORF">AN9259</name>
</gene>
<organism>
    <name type="scientific">Emericella nidulans (strain FGSC A4 / ATCC 38163 / CBS 112.46 / NRRL 194 / M139)</name>
    <name type="common">Aspergillus nidulans</name>
    <dbReference type="NCBI Taxonomy" id="227321"/>
    <lineage>
        <taxon>Eukaryota</taxon>
        <taxon>Fungi</taxon>
        <taxon>Dikarya</taxon>
        <taxon>Ascomycota</taxon>
        <taxon>Pezizomycotina</taxon>
        <taxon>Eurotiomycetes</taxon>
        <taxon>Eurotiomycetidae</taxon>
        <taxon>Eurotiales</taxon>
        <taxon>Aspergillaceae</taxon>
        <taxon>Aspergillus</taxon>
        <taxon>Aspergillus subgen. Nidulantes</taxon>
    </lineage>
</organism>
<sequence>MAVISELKRHHPKTGLLRYLPTGVVPYGELVRIHRALGYYLNTSPYVVGIAYTAATAETKLPLDLLLDRLLLLTLWSLILRSAGCAWNDLVDVDIDRQISRTQSRPLPRGAISLSAATIFTACLFVLGCSLLLFLPRECLFDAGIKVFFALLYPFGKRFTDHPQLILINIAWAIPMAMHSLGMEPSSQILSMLCMCVFFSAVIVMIDLVYSRQDTEEDLKVGVKSMAVRYRNCVETMAYSLFAISSLALLFGGVLGGLRVPFVLFSVGGHIVGFWRFLRASLQAGPAGVESRAKSSCLIASVFWVLGLGIEYAEMVKEKDNPTDKKKHPH</sequence>
<dbReference type="EC" id="2.5.1.-" evidence="9"/>
<dbReference type="EMBL" id="BN001308">
    <property type="protein sequence ID" value="CBF87269.1"/>
    <property type="molecule type" value="Genomic_DNA"/>
</dbReference>
<dbReference type="EMBL" id="AACD01000172">
    <property type="protein sequence ID" value="EAA66326.1"/>
    <property type="molecule type" value="Genomic_DNA"/>
</dbReference>
<dbReference type="RefSeq" id="XP_682528.1">
    <property type="nucleotide sequence ID" value="XM_677436.1"/>
</dbReference>
<dbReference type="SMR" id="Q5AR21"/>
<dbReference type="FunCoup" id="Q5AR21">
    <property type="interactions" value="337"/>
</dbReference>
<dbReference type="STRING" id="227321.Q5AR21"/>
<dbReference type="EnsemblFungi" id="CBF87269">
    <property type="protein sequence ID" value="CBF87269"/>
    <property type="gene ID" value="ANIA_09259"/>
</dbReference>
<dbReference type="KEGG" id="ani:ANIA_09259"/>
<dbReference type="VEuPathDB" id="FungiDB:AN9259"/>
<dbReference type="eggNOG" id="KOG1381">
    <property type="taxonomic scope" value="Eukaryota"/>
</dbReference>
<dbReference type="HOGENOM" id="CLU_034879_2_0_1"/>
<dbReference type="InParanoid" id="Q5AR21"/>
<dbReference type="OMA" id="FGTWIRP"/>
<dbReference type="OrthoDB" id="18170at2759"/>
<dbReference type="UniPathway" id="UPA00213"/>
<dbReference type="Proteomes" id="UP000000560">
    <property type="component" value="Chromosome VIII"/>
</dbReference>
<dbReference type="GO" id="GO:0005743">
    <property type="term" value="C:mitochondrial inner membrane"/>
    <property type="evidence" value="ECO:0000318"/>
    <property type="project" value="GO_Central"/>
</dbReference>
<dbReference type="GO" id="GO:0008412">
    <property type="term" value="F:4-hydroxybenzoate polyprenyltransferase activity"/>
    <property type="evidence" value="ECO:0000318"/>
    <property type="project" value="GO_Central"/>
</dbReference>
<dbReference type="GO" id="GO:1900560">
    <property type="term" value="P:austinol biosynthetic process"/>
    <property type="evidence" value="ECO:0000315"/>
    <property type="project" value="AspGD"/>
</dbReference>
<dbReference type="GO" id="GO:1900563">
    <property type="term" value="P:dehydroaustinol biosynthetic process"/>
    <property type="evidence" value="ECO:0000315"/>
    <property type="project" value="AspGD"/>
</dbReference>
<dbReference type="GO" id="GO:0016114">
    <property type="term" value="P:terpenoid biosynthetic process"/>
    <property type="evidence" value="ECO:0007669"/>
    <property type="project" value="UniProtKB-UniPathway"/>
</dbReference>
<dbReference type="GO" id="GO:0006744">
    <property type="term" value="P:ubiquinone biosynthetic process"/>
    <property type="evidence" value="ECO:0000318"/>
    <property type="project" value="GO_Central"/>
</dbReference>
<dbReference type="CDD" id="cd13959">
    <property type="entry name" value="PT_UbiA_COQ2"/>
    <property type="match status" value="1"/>
</dbReference>
<dbReference type="FunFam" id="1.10.357.140:FF:000008">
    <property type="entry name" value="4-hydroxybenzoate octaprenyltransferase"/>
    <property type="match status" value="1"/>
</dbReference>
<dbReference type="Gene3D" id="1.10.357.140">
    <property type="entry name" value="UbiA prenyltransferase"/>
    <property type="match status" value="1"/>
</dbReference>
<dbReference type="Gene3D" id="1.20.120.1780">
    <property type="entry name" value="UbiA prenyltransferase"/>
    <property type="match status" value="1"/>
</dbReference>
<dbReference type="InterPro" id="IPR039653">
    <property type="entry name" value="Prenyltransferase"/>
</dbReference>
<dbReference type="InterPro" id="IPR000537">
    <property type="entry name" value="UbiA_prenyltransferase"/>
</dbReference>
<dbReference type="InterPro" id="IPR044878">
    <property type="entry name" value="UbiA_sf"/>
</dbReference>
<dbReference type="PANTHER" id="PTHR11048:SF39">
    <property type="entry name" value="POLYPRENYL TRANSFERASE AUSN"/>
    <property type="match status" value="1"/>
</dbReference>
<dbReference type="PANTHER" id="PTHR11048">
    <property type="entry name" value="PRENYLTRANSFERASES"/>
    <property type="match status" value="1"/>
</dbReference>
<dbReference type="Pfam" id="PF01040">
    <property type="entry name" value="UbiA"/>
    <property type="match status" value="1"/>
</dbReference>
<accession>Q5AR21</accession>
<accession>C8VQ99</accession>